<dbReference type="EC" id="6.2.1.5" evidence="1"/>
<dbReference type="EMBL" id="CP001091">
    <property type="protein sequence ID" value="ACE61181.1"/>
    <property type="molecule type" value="Genomic_DNA"/>
</dbReference>
<dbReference type="RefSeq" id="WP_005607215.1">
    <property type="nucleotide sequence ID" value="NC_010939.1"/>
</dbReference>
<dbReference type="SMR" id="B3GX29"/>
<dbReference type="KEGG" id="apa:APP7_0529"/>
<dbReference type="HOGENOM" id="CLU_037430_0_2_6"/>
<dbReference type="UniPathway" id="UPA00223">
    <property type="reaction ID" value="UER00999"/>
</dbReference>
<dbReference type="Proteomes" id="UP000001226">
    <property type="component" value="Chromosome"/>
</dbReference>
<dbReference type="GO" id="GO:0005829">
    <property type="term" value="C:cytosol"/>
    <property type="evidence" value="ECO:0007669"/>
    <property type="project" value="TreeGrafter"/>
</dbReference>
<dbReference type="GO" id="GO:0042709">
    <property type="term" value="C:succinate-CoA ligase complex"/>
    <property type="evidence" value="ECO:0007669"/>
    <property type="project" value="TreeGrafter"/>
</dbReference>
<dbReference type="GO" id="GO:0005524">
    <property type="term" value="F:ATP binding"/>
    <property type="evidence" value="ECO:0007669"/>
    <property type="project" value="UniProtKB-UniRule"/>
</dbReference>
<dbReference type="GO" id="GO:0000287">
    <property type="term" value="F:magnesium ion binding"/>
    <property type="evidence" value="ECO:0007669"/>
    <property type="project" value="UniProtKB-UniRule"/>
</dbReference>
<dbReference type="GO" id="GO:0004775">
    <property type="term" value="F:succinate-CoA ligase (ADP-forming) activity"/>
    <property type="evidence" value="ECO:0007669"/>
    <property type="project" value="UniProtKB-UniRule"/>
</dbReference>
<dbReference type="GO" id="GO:0004776">
    <property type="term" value="F:succinate-CoA ligase (GDP-forming) activity"/>
    <property type="evidence" value="ECO:0007669"/>
    <property type="project" value="RHEA"/>
</dbReference>
<dbReference type="GO" id="GO:0006104">
    <property type="term" value="P:succinyl-CoA metabolic process"/>
    <property type="evidence" value="ECO:0007669"/>
    <property type="project" value="TreeGrafter"/>
</dbReference>
<dbReference type="GO" id="GO:0006099">
    <property type="term" value="P:tricarboxylic acid cycle"/>
    <property type="evidence" value="ECO:0007669"/>
    <property type="project" value="UniProtKB-UniRule"/>
</dbReference>
<dbReference type="FunFam" id="3.30.1490.20:FF:000002">
    <property type="entry name" value="Succinate--CoA ligase [ADP-forming] subunit beta"/>
    <property type="match status" value="1"/>
</dbReference>
<dbReference type="FunFam" id="3.30.470.20:FF:000002">
    <property type="entry name" value="Succinate--CoA ligase [ADP-forming] subunit beta"/>
    <property type="match status" value="1"/>
</dbReference>
<dbReference type="FunFam" id="3.40.50.261:FF:000001">
    <property type="entry name" value="Succinate--CoA ligase [ADP-forming] subunit beta"/>
    <property type="match status" value="1"/>
</dbReference>
<dbReference type="Gene3D" id="3.30.1490.20">
    <property type="entry name" value="ATP-grasp fold, A domain"/>
    <property type="match status" value="1"/>
</dbReference>
<dbReference type="Gene3D" id="3.30.470.20">
    <property type="entry name" value="ATP-grasp fold, B domain"/>
    <property type="match status" value="1"/>
</dbReference>
<dbReference type="Gene3D" id="3.40.50.261">
    <property type="entry name" value="Succinyl-CoA synthetase domains"/>
    <property type="match status" value="1"/>
</dbReference>
<dbReference type="HAMAP" id="MF_00558">
    <property type="entry name" value="Succ_CoA_beta"/>
    <property type="match status" value="1"/>
</dbReference>
<dbReference type="InterPro" id="IPR013650">
    <property type="entry name" value="ATP-grasp_succ-CoA_synth-type"/>
</dbReference>
<dbReference type="InterPro" id="IPR013815">
    <property type="entry name" value="ATP_grasp_subdomain_1"/>
</dbReference>
<dbReference type="InterPro" id="IPR017866">
    <property type="entry name" value="Succ-CoA_synthase_bsu_CS"/>
</dbReference>
<dbReference type="InterPro" id="IPR005811">
    <property type="entry name" value="SUCC_ACL_C"/>
</dbReference>
<dbReference type="InterPro" id="IPR005809">
    <property type="entry name" value="Succ_CoA_ligase-like_bsu"/>
</dbReference>
<dbReference type="InterPro" id="IPR016102">
    <property type="entry name" value="Succinyl-CoA_synth-like"/>
</dbReference>
<dbReference type="NCBIfam" id="NF001913">
    <property type="entry name" value="PRK00696.1"/>
    <property type="match status" value="1"/>
</dbReference>
<dbReference type="NCBIfam" id="TIGR01016">
    <property type="entry name" value="sucCoAbeta"/>
    <property type="match status" value="1"/>
</dbReference>
<dbReference type="PANTHER" id="PTHR11815:SF10">
    <property type="entry name" value="SUCCINATE--COA LIGASE [GDP-FORMING] SUBUNIT BETA, MITOCHONDRIAL"/>
    <property type="match status" value="1"/>
</dbReference>
<dbReference type="PANTHER" id="PTHR11815">
    <property type="entry name" value="SUCCINYL-COA SYNTHETASE BETA CHAIN"/>
    <property type="match status" value="1"/>
</dbReference>
<dbReference type="Pfam" id="PF08442">
    <property type="entry name" value="ATP-grasp_2"/>
    <property type="match status" value="1"/>
</dbReference>
<dbReference type="Pfam" id="PF00549">
    <property type="entry name" value="Ligase_CoA"/>
    <property type="match status" value="1"/>
</dbReference>
<dbReference type="PIRSF" id="PIRSF001554">
    <property type="entry name" value="SucCS_beta"/>
    <property type="match status" value="1"/>
</dbReference>
<dbReference type="SUPFAM" id="SSF56059">
    <property type="entry name" value="Glutathione synthetase ATP-binding domain-like"/>
    <property type="match status" value="1"/>
</dbReference>
<dbReference type="SUPFAM" id="SSF52210">
    <property type="entry name" value="Succinyl-CoA synthetase domains"/>
    <property type="match status" value="1"/>
</dbReference>
<dbReference type="PROSITE" id="PS01217">
    <property type="entry name" value="SUCCINYL_COA_LIG_3"/>
    <property type="match status" value="1"/>
</dbReference>
<keyword id="KW-0067">ATP-binding</keyword>
<keyword id="KW-0436">Ligase</keyword>
<keyword id="KW-0460">Magnesium</keyword>
<keyword id="KW-0479">Metal-binding</keyword>
<keyword id="KW-0547">Nucleotide-binding</keyword>
<keyword id="KW-0816">Tricarboxylic acid cycle</keyword>
<comment type="function">
    <text evidence="1">Succinyl-CoA synthetase functions in the citric acid cycle (TCA), coupling the hydrolysis of succinyl-CoA to the synthesis of either ATP or GTP and thus represents the only step of substrate-level phosphorylation in the TCA. The beta subunit provides nucleotide specificity of the enzyme and binds the substrate succinate, while the binding sites for coenzyme A and phosphate are found in the alpha subunit.</text>
</comment>
<comment type="catalytic activity">
    <reaction evidence="1">
        <text>succinate + ATP + CoA = succinyl-CoA + ADP + phosphate</text>
        <dbReference type="Rhea" id="RHEA:17661"/>
        <dbReference type="ChEBI" id="CHEBI:30031"/>
        <dbReference type="ChEBI" id="CHEBI:30616"/>
        <dbReference type="ChEBI" id="CHEBI:43474"/>
        <dbReference type="ChEBI" id="CHEBI:57287"/>
        <dbReference type="ChEBI" id="CHEBI:57292"/>
        <dbReference type="ChEBI" id="CHEBI:456216"/>
        <dbReference type="EC" id="6.2.1.5"/>
    </reaction>
    <physiologicalReaction direction="right-to-left" evidence="1">
        <dbReference type="Rhea" id="RHEA:17663"/>
    </physiologicalReaction>
</comment>
<comment type="catalytic activity">
    <reaction evidence="1">
        <text>GTP + succinate + CoA = succinyl-CoA + GDP + phosphate</text>
        <dbReference type="Rhea" id="RHEA:22120"/>
        <dbReference type="ChEBI" id="CHEBI:30031"/>
        <dbReference type="ChEBI" id="CHEBI:37565"/>
        <dbReference type="ChEBI" id="CHEBI:43474"/>
        <dbReference type="ChEBI" id="CHEBI:57287"/>
        <dbReference type="ChEBI" id="CHEBI:57292"/>
        <dbReference type="ChEBI" id="CHEBI:58189"/>
    </reaction>
    <physiologicalReaction direction="right-to-left" evidence="1">
        <dbReference type="Rhea" id="RHEA:22122"/>
    </physiologicalReaction>
</comment>
<comment type="cofactor">
    <cofactor evidence="1">
        <name>Mg(2+)</name>
        <dbReference type="ChEBI" id="CHEBI:18420"/>
    </cofactor>
    <text evidence="1">Binds 1 Mg(2+) ion per subunit.</text>
</comment>
<comment type="pathway">
    <text evidence="1">Carbohydrate metabolism; tricarboxylic acid cycle; succinate from succinyl-CoA (ligase route): step 1/1.</text>
</comment>
<comment type="subunit">
    <text evidence="1">Heterotetramer of two alpha and two beta subunits.</text>
</comment>
<comment type="similarity">
    <text evidence="1">Belongs to the succinate/malate CoA ligase beta subunit family.</text>
</comment>
<proteinExistence type="inferred from homology"/>
<reference key="1">
    <citation type="submission" date="2008-06" db="EMBL/GenBank/DDBJ databases">
        <title>Genome and proteome analysis of A. pleuropneumoniae serotype 7.</title>
        <authorList>
            <person name="Linke B."/>
            <person name="Buettner F."/>
            <person name="Martinez-Arias R."/>
            <person name="Goesmann A."/>
            <person name="Baltes N."/>
            <person name="Tegetmeyer H."/>
            <person name="Singh M."/>
            <person name="Gerlach G.F."/>
        </authorList>
    </citation>
    <scope>NUCLEOTIDE SEQUENCE [LARGE SCALE GENOMIC DNA]</scope>
    <source>
        <strain>AP76</strain>
    </source>
</reference>
<sequence length="388" mass="41862">MNLHEYQAKQIFAQYRLPVSKGIVCHSLDDAVSAIHTLAGDTWAAKCQVHAGGRGKAGGVKLVRSEAEIREFCNQWLGQRLVTFQTDKNGQPVNTIYLEETCLIERELYLGAVIDRSSQKIVFMASNAGGMNIEDVAAQTPELIHKATIDPLTGAQAFQGRELAFKLGLSGDQIKQFAHLFVQLAKLFIEKDLALLEVNPLVLTKQGQLLCLDAKMVIDSNALYRHPELKALQDPSQEDAREADAAKWDLNYVALDGNIGCMVNGAGLAMGTMDIVKLHGGRPANFLDVGGGATKERVSEAFKLILSDQNVKAVLVNIFGGIVRCDLIAEGIIAAVNEVGINIPVIVRLEGTNAELGREILANSSLRLIAANTLTQAAQLAVKAAEGK</sequence>
<protein>
    <recommendedName>
        <fullName evidence="1">Succinate--CoA ligase [ADP-forming] subunit beta</fullName>
        <ecNumber evidence="1">6.2.1.5</ecNumber>
    </recommendedName>
    <alternativeName>
        <fullName evidence="1">Succinyl-CoA synthetase subunit beta</fullName>
        <shortName evidence="1">SCS-beta</shortName>
    </alternativeName>
</protein>
<evidence type="ECO:0000255" key="1">
    <source>
        <dbReference type="HAMAP-Rule" id="MF_00558"/>
    </source>
</evidence>
<organism>
    <name type="scientific">Actinobacillus pleuropneumoniae serotype 7 (strain AP76)</name>
    <dbReference type="NCBI Taxonomy" id="537457"/>
    <lineage>
        <taxon>Bacteria</taxon>
        <taxon>Pseudomonadati</taxon>
        <taxon>Pseudomonadota</taxon>
        <taxon>Gammaproteobacteria</taxon>
        <taxon>Pasteurellales</taxon>
        <taxon>Pasteurellaceae</taxon>
        <taxon>Actinobacillus</taxon>
    </lineage>
</organism>
<feature type="chain" id="PRO_1000129153" description="Succinate--CoA ligase [ADP-forming] subunit beta">
    <location>
        <begin position="1"/>
        <end position="388"/>
    </location>
</feature>
<feature type="binding site" evidence="1">
    <location>
        <position position="46"/>
    </location>
    <ligand>
        <name>ATP</name>
        <dbReference type="ChEBI" id="CHEBI:30616"/>
    </ligand>
</feature>
<feature type="binding site" evidence="1">
    <location>
        <begin position="53"/>
        <end position="55"/>
    </location>
    <ligand>
        <name>ATP</name>
        <dbReference type="ChEBI" id="CHEBI:30616"/>
    </ligand>
</feature>
<feature type="binding site" evidence="1">
    <location>
        <position position="99"/>
    </location>
    <ligand>
        <name>ATP</name>
        <dbReference type="ChEBI" id="CHEBI:30616"/>
    </ligand>
</feature>
<feature type="binding site" evidence="1">
    <location>
        <position position="102"/>
    </location>
    <ligand>
        <name>ATP</name>
        <dbReference type="ChEBI" id="CHEBI:30616"/>
    </ligand>
</feature>
<feature type="binding site" evidence="1">
    <location>
        <position position="107"/>
    </location>
    <ligand>
        <name>ATP</name>
        <dbReference type="ChEBI" id="CHEBI:30616"/>
    </ligand>
</feature>
<feature type="binding site" evidence="1">
    <location>
        <position position="199"/>
    </location>
    <ligand>
        <name>Mg(2+)</name>
        <dbReference type="ChEBI" id="CHEBI:18420"/>
    </ligand>
</feature>
<feature type="binding site" evidence="1">
    <location>
        <position position="213"/>
    </location>
    <ligand>
        <name>Mg(2+)</name>
        <dbReference type="ChEBI" id="CHEBI:18420"/>
    </ligand>
</feature>
<feature type="binding site" evidence="1">
    <location>
        <position position="264"/>
    </location>
    <ligand>
        <name>substrate</name>
        <note>ligand shared with subunit alpha</note>
    </ligand>
</feature>
<feature type="binding site" evidence="1">
    <location>
        <begin position="321"/>
        <end position="323"/>
    </location>
    <ligand>
        <name>substrate</name>
        <note>ligand shared with subunit alpha</note>
    </ligand>
</feature>
<name>SUCC_ACTP7</name>
<accession>B3GX29</accession>
<gene>
    <name evidence="1" type="primary">sucC</name>
    <name type="ordered locus">APP7_0529</name>
</gene>